<organism>
    <name type="scientific">Acinetobacter baumannii (strain SDF)</name>
    <dbReference type="NCBI Taxonomy" id="509170"/>
    <lineage>
        <taxon>Bacteria</taxon>
        <taxon>Pseudomonadati</taxon>
        <taxon>Pseudomonadota</taxon>
        <taxon>Gammaproteobacteria</taxon>
        <taxon>Moraxellales</taxon>
        <taxon>Moraxellaceae</taxon>
        <taxon>Acinetobacter</taxon>
        <taxon>Acinetobacter calcoaceticus/baumannii complex</taxon>
    </lineage>
</organism>
<proteinExistence type="inferred from homology"/>
<feature type="initiator methionine" description="Removed" evidence="1">
    <location>
        <position position="1"/>
    </location>
</feature>
<feature type="chain" id="PRO_1000094025" description="Formamidopyrimidine-DNA glycosylase">
    <location>
        <begin position="2"/>
        <end position="274"/>
    </location>
</feature>
<feature type="zinc finger region" description="FPG-type" evidence="2">
    <location>
        <begin position="233"/>
        <end position="267"/>
    </location>
</feature>
<feature type="active site" description="Schiff-base intermediate with DNA" evidence="2">
    <location>
        <position position="2"/>
    </location>
</feature>
<feature type="active site" description="Proton donor" evidence="2">
    <location>
        <position position="3"/>
    </location>
</feature>
<feature type="active site" description="Proton donor; for beta-elimination activity" evidence="2">
    <location>
        <position position="56"/>
    </location>
</feature>
<feature type="active site" description="Proton donor; for delta-elimination activity" evidence="2">
    <location>
        <position position="257"/>
    </location>
</feature>
<feature type="binding site" evidence="2">
    <location>
        <position position="89"/>
    </location>
    <ligand>
        <name>DNA</name>
        <dbReference type="ChEBI" id="CHEBI:16991"/>
    </ligand>
</feature>
<feature type="binding site" evidence="2">
    <location>
        <position position="107"/>
    </location>
    <ligand>
        <name>DNA</name>
        <dbReference type="ChEBI" id="CHEBI:16991"/>
    </ligand>
</feature>
<feature type="binding site" evidence="2">
    <location>
        <position position="148"/>
    </location>
    <ligand>
        <name>DNA</name>
        <dbReference type="ChEBI" id="CHEBI:16991"/>
    </ligand>
</feature>
<protein>
    <recommendedName>
        <fullName evidence="2">Formamidopyrimidine-DNA glycosylase</fullName>
        <shortName evidence="2">Fapy-DNA glycosylase</shortName>
        <ecNumber evidence="2">3.2.2.23</ecNumber>
    </recommendedName>
    <alternativeName>
        <fullName evidence="2">DNA-(apurinic or apyrimidinic site) lyase MutM</fullName>
        <shortName evidence="2">AP lyase MutM</shortName>
        <ecNumber evidence="2">4.2.99.18</ecNumber>
    </alternativeName>
</protein>
<gene>
    <name evidence="2" type="primary">mutM</name>
    <name evidence="2" type="synonym">fpg</name>
    <name type="ordered locus">ABSDF0616</name>
</gene>
<reference key="1">
    <citation type="journal article" date="2008" name="PLoS ONE">
        <title>Comparative analysis of Acinetobacters: three genomes for three lifestyles.</title>
        <authorList>
            <person name="Vallenet D."/>
            <person name="Nordmann P."/>
            <person name="Barbe V."/>
            <person name="Poirel L."/>
            <person name="Mangenot S."/>
            <person name="Bataille E."/>
            <person name="Dossat C."/>
            <person name="Gas S."/>
            <person name="Kreimeyer A."/>
            <person name="Lenoble P."/>
            <person name="Oztas S."/>
            <person name="Poulain J."/>
            <person name="Segurens B."/>
            <person name="Robert C."/>
            <person name="Abergel C."/>
            <person name="Claverie J.-M."/>
            <person name="Raoult D."/>
            <person name="Medigue C."/>
            <person name="Weissenbach J."/>
            <person name="Cruveiller S."/>
        </authorList>
    </citation>
    <scope>NUCLEOTIDE SEQUENCE [LARGE SCALE GENOMIC DNA]</scope>
    <source>
        <strain>SDF</strain>
    </source>
</reference>
<evidence type="ECO:0000250" key="1"/>
<evidence type="ECO:0000255" key="2">
    <source>
        <dbReference type="HAMAP-Rule" id="MF_00103"/>
    </source>
</evidence>
<accession>B0VRV3</accession>
<dbReference type="EC" id="3.2.2.23" evidence="2"/>
<dbReference type="EC" id="4.2.99.18" evidence="2"/>
<dbReference type="EMBL" id="CU468230">
    <property type="protein sequence ID" value="CAO99994.1"/>
    <property type="molecule type" value="Genomic_DNA"/>
</dbReference>
<dbReference type="SMR" id="B0VRV3"/>
<dbReference type="KEGG" id="abm:ABSDF0616"/>
<dbReference type="HOGENOM" id="CLU_038423_1_1_6"/>
<dbReference type="Proteomes" id="UP000001741">
    <property type="component" value="Chromosome"/>
</dbReference>
<dbReference type="GO" id="GO:0034039">
    <property type="term" value="F:8-oxo-7,8-dihydroguanine DNA N-glycosylase activity"/>
    <property type="evidence" value="ECO:0007669"/>
    <property type="project" value="TreeGrafter"/>
</dbReference>
<dbReference type="GO" id="GO:0140078">
    <property type="term" value="F:class I DNA-(apurinic or apyrimidinic site) endonuclease activity"/>
    <property type="evidence" value="ECO:0007669"/>
    <property type="project" value="UniProtKB-EC"/>
</dbReference>
<dbReference type="GO" id="GO:0003684">
    <property type="term" value="F:damaged DNA binding"/>
    <property type="evidence" value="ECO:0007669"/>
    <property type="project" value="InterPro"/>
</dbReference>
<dbReference type="GO" id="GO:0008270">
    <property type="term" value="F:zinc ion binding"/>
    <property type="evidence" value="ECO:0007669"/>
    <property type="project" value="UniProtKB-UniRule"/>
</dbReference>
<dbReference type="GO" id="GO:0006284">
    <property type="term" value="P:base-excision repair"/>
    <property type="evidence" value="ECO:0007669"/>
    <property type="project" value="InterPro"/>
</dbReference>
<dbReference type="CDD" id="cd08966">
    <property type="entry name" value="EcFpg-like_N"/>
    <property type="match status" value="1"/>
</dbReference>
<dbReference type="FunFam" id="1.10.8.50:FF:000003">
    <property type="entry name" value="Formamidopyrimidine-DNA glycosylase"/>
    <property type="match status" value="1"/>
</dbReference>
<dbReference type="Gene3D" id="1.10.8.50">
    <property type="match status" value="1"/>
</dbReference>
<dbReference type="Gene3D" id="3.20.190.10">
    <property type="entry name" value="MutM-like, N-terminal"/>
    <property type="match status" value="1"/>
</dbReference>
<dbReference type="HAMAP" id="MF_00103">
    <property type="entry name" value="Fapy_DNA_glycosyl"/>
    <property type="match status" value="1"/>
</dbReference>
<dbReference type="InterPro" id="IPR015886">
    <property type="entry name" value="DNA_glyclase/AP_lyase_DNA-bd"/>
</dbReference>
<dbReference type="InterPro" id="IPR020629">
    <property type="entry name" value="Formamido-pyr_DNA_Glyclase"/>
</dbReference>
<dbReference type="InterPro" id="IPR012319">
    <property type="entry name" value="FPG_cat"/>
</dbReference>
<dbReference type="InterPro" id="IPR035937">
    <property type="entry name" value="MutM-like_N-ter"/>
</dbReference>
<dbReference type="InterPro" id="IPR010979">
    <property type="entry name" value="Ribosomal_uS13-like_H2TH"/>
</dbReference>
<dbReference type="InterPro" id="IPR000214">
    <property type="entry name" value="Znf_DNA_glyclase/AP_lyase"/>
</dbReference>
<dbReference type="InterPro" id="IPR010663">
    <property type="entry name" value="Znf_FPG/IleRS"/>
</dbReference>
<dbReference type="NCBIfam" id="TIGR00577">
    <property type="entry name" value="fpg"/>
    <property type="match status" value="1"/>
</dbReference>
<dbReference type="NCBIfam" id="NF002211">
    <property type="entry name" value="PRK01103.1"/>
    <property type="match status" value="1"/>
</dbReference>
<dbReference type="PANTHER" id="PTHR22993">
    <property type="entry name" value="FORMAMIDOPYRIMIDINE-DNA GLYCOSYLASE"/>
    <property type="match status" value="1"/>
</dbReference>
<dbReference type="PANTHER" id="PTHR22993:SF9">
    <property type="entry name" value="FORMAMIDOPYRIMIDINE-DNA GLYCOSYLASE"/>
    <property type="match status" value="1"/>
</dbReference>
<dbReference type="Pfam" id="PF01149">
    <property type="entry name" value="Fapy_DNA_glyco"/>
    <property type="match status" value="1"/>
</dbReference>
<dbReference type="Pfam" id="PF06831">
    <property type="entry name" value="H2TH"/>
    <property type="match status" value="1"/>
</dbReference>
<dbReference type="Pfam" id="PF06827">
    <property type="entry name" value="zf-FPG_IleRS"/>
    <property type="match status" value="1"/>
</dbReference>
<dbReference type="SMART" id="SM00898">
    <property type="entry name" value="Fapy_DNA_glyco"/>
    <property type="match status" value="1"/>
</dbReference>
<dbReference type="SMART" id="SM01232">
    <property type="entry name" value="H2TH"/>
    <property type="match status" value="1"/>
</dbReference>
<dbReference type="SUPFAM" id="SSF57716">
    <property type="entry name" value="Glucocorticoid receptor-like (DNA-binding domain)"/>
    <property type="match status" value="1"/>
</dbReference>
<dbReference type="SUPFAM" id="SSF81624">
    <property type="entry name" value="N-terminal domain of MutM-like DNA repair proteins"/>
    <property type="match status" value="1"/>
</dbReference>
<dbReference type="SUPFAM" id="SSF46946">
    <property type="entry name" value="S13-like H2TH domain"/>
    <property type="match status" value="1"/>
</dbReference>
<dbReference type="PROSITE" id="PS51068">
    <property type="entry name" value="FPG_CAT"/>
    <property type="match status" value="1"/>
</dbReference>
<dbReference type="PROSITE" id="PS51066">
    <property type="entry name" value="ZF_FPG_2"/>
    <property type="match status" value="1"/>
</dbReference>
<keyword id="KW-0227">DNA damage</keyword>
<keyword id="KW-0234">DNA repair</keyword>
<keyword id="KW-0238">DNA-binding</keyword>
<keyword id="KW-0326">Glycosidase</keyword>
<keyword id="KW-0378">Hydrolase</keyword>
<keyword id="KW-0456">Lyase</keyword>
<keyword id="KW-0479">Metal-binding</keyword>
<keyword id="KW-0511">Multifunctional enzyme</keyword>
<keyword id="KW-0862">Zinc</keyword>
<keyword id="KW-0863">Zinc-finger</keyword>
<sequence>MPELPEVETTKTSLFPLLNQKVLSVEVRNPSLRWPIPDNVQKLVGQRLIGLNRRSKYILAEFEQDQMLWHLGMSGSFRLCQPNDELRKHDHLIIQFEDQQLRYHDPRRFGCILWLNPETQGKLIDTLGPEPLSTDFHAEYLASKLKNKSVGIKIALMDNHVVVGVGNIYATESLFNVGIHPAQPAGDLTMQQIEKLVVEIKRILKSAIDLGGSTLRDYSNAMGENGYFQQTLLAYGRAREMCVNCETTLENLKLGQRASVFCPQCQPLKKLRKP</sequence>
<name>FPG_ACIBS</name>
<comment type="function">
    <text evidence="2">Involved in base excision repair of DNA damaged by oxidation or by mutagenic agents. Acts as a DNA glycosylase that recognizes and removes damaged bases. Has a preference for oxidized purines, such as 7,8-dihydro-8-oxoguanine (8-oxoG). Has AP (apurinic/apyrimidinic) lyase activity and introduces nicks in the DNA strand. Cleaves the DNA backbone by beta-delta elimination to generate a single-strand break at the site of the removed base with both 3'- and 5'-phosphates.</text>
</comment>
<comment type="catalytic activity">
    <reaction evidence="2">
        <text>Hydrolysis of DNA containing ring-opened 7-methylguanine residues, releasing 2,6-diamino-4-hydroxy-5-(N-methyl)formamidopyrimidine.</text>
        <dbReference type="EC" id="3.2.2.23"/>
    </reaction>
</comment>
<comment type="catalytic activity">
    <reaction evidence="2">
        <text>2'-deoxyribonucleotide-(2'-deoxyribose 5'-phosphate)-2'-deoxyribonucleotide-DNA = a 3'-end 2'-deoxyribonucleotide-(2,3-dehydro-2,3-deoxyribose 5'-phosphate)-DNA + a 5'-end 5'-phospho-2'-deoxyribonucleoside-DNA + H(+)</text>
        <dbReference type="Rhea" id="RHEA:66592"/>
        <dbReference type="Rhea" id="RHEA-COMP:13180"/>
        <dbReference type="Rhea" id="RHEA-COMP:16897"/>
        <dbReference type="Rhea" id="RHEA-COMP:17067"/>
        <dbReference type="ChEBI" id="CHEBI:15378"/>
        <dbReference type="ChEBI" id="CHEBI:136412"/>
        <dbReference type="ChEBI" id="CHEBI:157695"/>
        <dbReference type="ChEBI" id="CHEBI:167181"/>
        <dbReference type="EC" id="4.2.99.18"/>
    </reaction>
</comment>
<comment type="cofactor">
    <cofactor evidence="2">
        <name>Zn(2+)</name>
        <dbReference type="ChEBI" id="CHEBI:29105"/>
    </cofactor>
    <text evidence="2">Binds 1 zinc ion per subunit.</text>
</comment>
<comment type="subunit">
    <text evidence="2">Monomer.</text>
</comment>
<comment type="similarity">
    <text evidence="2">Belongs to the FPG family.</text>
</comment>